<reference key="1">
    <citation type="submission" date="2009-02" db="EMBL/GenBank/DDBJ databases">
        <title>Vibrio splendidus str. LGP32 complete genome.</title>
        <authorList>
            <person name="Mazel D."/>
            <person name="Le Roux F."/>
        </authorList>
    </citation>
    <scope>NUCLEOTIDE SEQUENCE [LARGE SCALE GENOMIC DNA]</scope>
    <source>
        <strain>LGP32</strain>
    </source>
</reference>
<comment type="function">
    <text evidence="1">Catalyzes the thiamine diphosphate-dependent decarboxylation of 2-oxoglutarate and the subsequent addition of the resulting succinic semialdehyde-thiamine pyrophosphate anion to isochorismate to yield 2-succinyl-5-enolpyruvyl-6-hydroxy-3-cyclohexene-1-carboxylate (SEPHCHC).</text>
</comment>
<comment type="catalytic activity">
    <reaction evidence="1">
        <text>isochorismate + 2-oxoglutarate + H(+) = 5-enolpyruvoyl-6-hydroxy-2-succinyl-cyclohex-3-ene-1-carboxylate + CO2</text>
        <dbReference type="Rhea" id="RHEA:25593"/>
        <dbReference type="ChEBI" id="CHEBI:15378"/>
        <dbReference type="ChEBI" id="CHEBI:16526"/>
        <dbReference type="ChEBI" id="CHEBI:16810"/>
        <dbReference type="ChEBI" id="CHEBI:29780"/>
        <dbReference type="ChEBI" id="CHEBI:58818"/>
        <dbReference type="EC" id="2.2.1.9"/>
    </reaction>
</comment>
<comment type="cofactor">
    <cofactor evidence="1">
        <name>Mg(2+)</name>
        <dbReference type="ChEBI" id="CHEBI:18420"/>
    </cofactor>
    <cofactor evidence="1">
        <name>Mn(2+)</name>
        <dbReference type="ChEBI" id="CHEBI:29035"/>
    </cofactor>
</comment>
<comment type="cofactor">
    <cofactor evidence="1">
        <name>thiamine diphosphate</name>
        <dbReference type="ChEBI" id="CHEBI:58937"/>
    </cofactor>
    <text evidence="1">Binds 1 thiamine pyrophosphate per subunit.</text>
</comment>
<comment type="pathway">
    <text evidence="1">Quinol/quinone metabolism; 1,4-dihydroxy-2-naphthoate biosynthesis; 1,4-dihydroxy-2-naphthoate from chorismate: step 2/7.</text>
</comment>
<comment type="pathway">
    <text evidence="1">Quinol/quinone metabolism; menaquinone biosynthesis.</text>
</comment>
<comment type="subunit">
    <text evidence="1">Homodimer.</text>
</comment>
<comment type="similarity">
    <text evidence="1">Belongs to the TPP enzyme family. MenD subfamily.</text>
</comment>
<proteinExistence type="inferred from homology"/>
<gene>
    <name evidence="1" type="primary">menD</name>
    <name type="ordered locus">VS_2191</name>
</gene>
<sequence length="574" mass="62325">MNHDQAVLNRVWCNTLLEELARSGVEHVCVAPGSRSTPLTLEAEANPKLTLHTHFDERGLGFLALGLAKASNKPVAVIVTSGTAVANLLPATAESGLTREKLILLTSDRPIDLVDCGANQAIQQQGIFSSHVESALNLPSPTTQISLNWLLTSVDNALAKQRNVGGAIHINCPFPEPLYSANSAEMYAEYTSSISGWKSGTACYSQTFLPNQVNTQPIAPSEYLGRKGVVILGSLDIEQATKAQQFATALGWPVFCDPQSGVTSDWKHYDLWMQSDVAKAQLNQCDFILQFGERVVSKRLNHWIKSQASSFCSSQYIVVSPDTHRINQDHLPQTHIVADIESWVSEQHLPTLLGQHAGWAAPLVEIANTVQQLALAQISNNDQLTELSVAVDLSTRLKDRELFVGNSLMVRLVDMLSSISANQVYSNRGASGIDGLVATAAGVVKANQNPLIMLIGDTSLLYDLNSLALFTHNVTPMVIVVTNNDGGAIFDLLPVPEQQKQSLYQMPHGFSFEHAAAQFQLGYAAPETLNGYQTIVEQHFEQGQGTLLVEVKTPPEQAATLLKQFSAMLIEALA</sequence>
<keyword id="KW-0460">Magnesium</keyword>
<keyword id="KW-0464">Manganese</keyword>
<keyword id="KW-0474">Menaquinone biosynthesis</keyword>
<keyword id="KW-0479">Metal-binding</keyword>
<keyword id="KW-0786">Thiamine pyrophosphate</keyword>
<keyword id="KW-0808">Transferase</keyword>
<accession>B7VHY7</accession>
<name>MEND_VIBA3</name>
<feature type="chain" id="PRO_1000187099" description="2-succinyl-5-enolpyruvyl-6-hydroxy-3-cyclohexene-1-carboxylate synthase">
    <location>
        <begin position="1"/>
        <end position="574"/>
    </location>
</feature>
<evidence type="ECO:0000255" key="1">
    <source>
        <dbReference type="HAMAP-Rule" id="MF_01659"/>
    </source>
</evidence>
<organism>
    <name type="scientific">Vibrio atlanticus (strain LGP32)</name>
    <name type="common">Vibrio splendidus (strain Mel32)</name>
    <dbReference type="NCBI Taxonomy" id="575788"/>
    <lineage>
        <taxon>Bacteria</taxon>
        <taxon>Pseudomonadati</taxon>
        <taxon>Pseudomonadota</taxon>
        <taxon>Gammaproteobacteria</taxon>
        <taxon>Vibrionales</taxon>
        <taxon>Vibrionaceae</taxon>
        <taxon>Vibrio</taxon>
    </lineage>
</organism>
<protein>
    <recommendedName>
        <fullName evidence="1">2-succinyl-5-enolpyruvyl-6-hydroxy-3-cyclohexene-1-carboxylate synthase</fullName>
        <shortName evidence="1">SEPHCHC synthase</shortName>
        <ecNumber evidence="1">2.2.1.9</ecNumber>
    </recommendedName>
    <alternativeName>
        <fullName evidence="1">Menaquinone biosynthesis protein MenD</fullName>
    </alternativeName>
</protein>
<dbReference type="EC" id="2.2.1.9" evidence="1"/>
<dbReference type="EMBL" id="FM954972">
    <property type="protein sequence ID" value="CAV19357.1"/>
    <property type="molecule type" value="Genomic_DNA"/>
</dbReference>
<dbReference type="SMR" id="B7VHY7"/>
<dbReference type="STRING" id="575788.VS_2191"/>
<dbReference type="KEGG" id="vsp:VS_2191"/>
<dbReference type="PATRIC" id="fig|575788.5.peg.3457"/>
<dbReference type="eggNOG" id="COG1165">
    <property type="taxonomic scope" value="Bacteria"/>
</dbReference>
<dbReference type="HOGENOM" id="CLU_006051_3_0_6"/>
<dbReference type="UniPathway" id="UPA00079"/>
<dbReference type="UniPathway" id="UPA01057">
    <property type="reaction ID" value="UER00164"/>
</dbReference>
<dbReference type="Proteomes" id="UP000009100">
    <property type="component" value="Chromosome 1"/>
</dbReference>
<dbReference type="GO" id="GO:0070204">
    <property type="term" value="F:2-succinyl-5-enolpyruvyl-6-hydroxy-3-cyclohexene-1-carboxylic-acid synthase activity"/>
    <property type="evidence" value="ECO:0007669"/>
    <property type="project" value="UniProtKB-UniRule"/>
</dbReference>
<dbReference type="GO" id="GO:0000287">
    <property type="term" value="F:magnesium ion binding"/>
    <property type="evidence" value="ECO:0007669"/>
    <property type="project" value="UniProtKB-UniRule"/>
</dbReference>
<dbReference type="GO" id="GO:0030145">
    <property type="term" value="F:manganese ion binding"/>
    <property type="evidence" value="ECO:0007669"/>
    <property type="project" value="UniProtKB-UniRule"/>
</dbReference>
<dbReference type="GO" id="GO:0030976">
    <property type="term" value="F:thiamine pyrophosphate binding"/>
    <property type="evidence" value="ECO:0007669"/>
    <property type="project" value="UniProtKB-UniRule"/>
</dbReference>
<dbReference type="GO" id="GO:0009234">
    <property type="term" value="P:menaquinone biosynthetic process"/>
    <property type="evidence" value="ECO:0007669"/>
    <property type="project" value="UniProtKB-UniRule"/>
</dbReference>
<dbReference type="CDD" id="cd07037">
    <property type="entry name" value="TPP_PYR_MenD"/>
    <property type="match status" value="1"/>
</dbReference>
<dbReference type="CDD" id="cd02009">
    <property type="entry name" value="TPP_SHCHC_synthase"/>
    <property type="match status" value="1"/>
</dbReference>
<dbReference type="Gene3D" id="3.40.50.970">
    <property type="match status" value="2"/>
</dbReference>
<dbReference type="Gene3D" id="3.40.50.1220">
    <property type="entry name" value="TPP-binding domain"/>
    <property type="match status" value="1"/>
</dbReference>
<dbReference type="HAMAP" id="MF_01659">
    <property type="entry name" value="MenD"/>
    <property type="match status" value="1"/>
</dbReference>
<dbReference type="InterPro" id="IPR029035">
    <property type="entry name" value="DHS-like_NAD/FAD-binding_dom"/>
</dbReference>
<dbReference type="InterPro" id="IPR004433">
    <property type="entry name" value="MenaQ_synth_MenD"/>
</dbReference>
<dbReference type="InterPro" id="IPR032264">
    <property type="entry name" value="MenD_middle"/>
</dbReference>
<dbReference type="InterPro" id="IPR029061">
    <property type="entry name" value="THDP-binding"/>
</dbReference>
<dbReference type="InterPro" id="IPR012001">
    <property type="entry name" value="Thiamin_PyroP_enz_TPP-bd_dom"/>
</dbReference>
<dbReference type="InterPro" id="IPR011766">
    <property type="entry name" value="TPP_enzyme_TPP-bd"/>
</dbReference>
<dbReference type="NCBIfam" id="TIGR00173">
    <property type="entry name" value="menD"/>
    <property type="match status" value="1"/>
</dbReference>
<dbReference type="PANTHER" id="PTHR42916">
    <property type="entry name" value="2-SUCCINYL-5-ENOLPYRUVYL-6-HYDROXY-3-CYCLOHEXENE-1-CARBOXYLATE SYNTHASE"/>
    <property type="match status" value="1"/>
</dbReference>
<dbReference type="PANTHER" id="PTHR42916:SF1">
    <property type="entry name" value="PROTEIN PHYLLO, CHLOROPLASTIC"/>
    <property type="match status" value="1"/>
</dbReference>
<dbReference type="Pfam" id="PF02775">
    <property type="entry name" value="TPP_enzyme_C"/>
    <property type="match status" value="1"/>
</dbReference>
<dbReference type="Pfam" id="PF16582">
    <property type="entry name" value="TPP_enzyme_M_2"/>
    <property type="match status" value="1"/>
</dbReference>
<dbReference type="Pfam" id="PF02776">
    <property type="entry name" value="TPP_enzyme_N"/>
    <property type="match status" value="1"/>
</dbReference>
<dbReference type="PIRSF" id="PIRSF004983">
    <property type="entry name" value="MenD"/>
    <property type="match status" value="1"/>
</dbReference>
<dbReference type="SUPFAM" id="SSF52467">
    <property type="entry name" value="DHS-like NAD/FAD-binding domain"/>
    <property type="match status" value="1"/>
</dbReference>
<dbReference type="SUPFAM" id="SSF52518">
    <property type="entry name" value="Thiamin diphosphate-binding fold (THDP-binding)"/>
    <property type="match status" value="2"/>
</dbReference>